<protein>
    <recommendedName>
        <fullName>3 beta-hydroxysteroid dehydrogenase/Delta 5--&gt;4-isomerase</fullName>
        <shortName>3-beta-HSD</shortName>
    </recommendedName>
    <domain>
        <recommendedName>
            <fullName>3-beta-hydroxy-Delta(5)-steroid dehydrogenase</fullName>
            <ecNumber>1.1.1.145</ecNumber>
        </recommendedName>
        <alternativeName>
            <fullName>3-beta-hydroxy-5-ene steroid dehydrogenase</fullName>
        </alternativeName>
        <alternativeName>
            <fullName>Progesterone reductase</fullName>
        </alternativeName>
    </domain>
    <domain>
        <recommendedName>
            <fullName>Steroid Delta-isomerase</fullName>
            <ecNumber>5.3.3.1</ecNumber>
        </recommendedName>
        <alternativeName>
            <fullName>Delta-5-3-ketosteroid isomerase</fullName>
        </alternativeName>
    </domain>
</protein>
<sequence length="210" mass="24163">MEAIGPNKHGNPFIGHEHTLYDISPGHVYAKSKRMVEQLVTKANNSVIMNGAKLYTCCLRPTGIYGGGDKLTKVFYEQCTQHGNIMYRTVDDDAVHSRVYVGNVAWMHVLAVKYIQYPGSEIKGNAYFCYGYSPSCSYDMFNLLLMKPLGIEQGSRIPRWMLKMYTCKNDMKRILFRKPSLLNNYTLKISNTTFEARQQCRTRFQLLPYL</sequence>
<reference key="1">
    <citation type="journal article" date="1993" name="FEBS Lett.">
        <title>Genes of variola and vaccinia viruses necessary to overcome the host protective mechanisms.</title>
        <authorList>
            <person name="Shchelkunov S.N."/>
            <person name="Blinov V.M."/>
            <person name="Sandakhchiev L.S."/>
        </authorList>
    </citation>
    <scope>NUCLEOTIDE SEQUENCE [GENOMIC DNA]</scope>
</reference>
<reference key="2">
    <citation type="journal article" date="1994" name="Virus Res.">
        <title>Analysis of the nucleotide sequence of 53 kbp from the right terminus of the genome of variola major virus strain India-1967.</title>
        <authorList>
            <person name="Shchelkunov S.N."/>
            <person name="Blinov V.M."/>
            <person name="Resenchuk S.M."/>
            <person name="Totmenin A.V."/>
            <person name="Olenina L.V."/>
            <person name="Chirikova G.B."/>
            <person name="Sandakhchiev L.S."/>
        </authorList>
    </citation>
    <scope>NUCLEOTIDE SEQUENCE [GENOMIC DNA]</scope>
</reference>
<reference key="3">
    <citation type="journal article" date="1995" name="Virus Genes">
        <title>Two types of deletions in orthopoxvirus genomes.</title>
        <authorList>
            <person name="Shchelkunov S.N."/>
            <person name="Totmenin A.V."/>
        </authorList>
    </citation>
    <scope>NUCLEOTIDE SEQUENCE [GENOMIC DNA]</scope>
</reference>
<reference key="4">
    <citation type="journal article" date="1996" name="Virus Res.">
        <title>Analysis of the nucleotide sequence of 23.8 kbp from the left terminus of the genome of variola major virus strain India-1967.</title>
        <authorList>
            <person name="Shchelkunov S.N."/>
            <person name="Totmenin A.V."/>
            <person name="Sandakhchiev L.S."/>
        </authorList>
    </citation>
    <scope>NUCLEOTIDE SEQUENCE [GENOMIC DNA]</scope>
</reference>
<feature type="chain" id="PRO_0000412627" description="3 beta-hydroxysteroid dehydrogenase/Delta 5--&gt;4-isomerase">
    <location>
        <begin position="1"/>
        <end position="210"/>
    </location>
</feature>
<feature type="active site" description="Proton acceptor" evidence="1">
    <location>
        <position position="29"/>
    </location>
</feature>
<feature type="binding site" evidence="1">
    <location>
        <position position="33"/>
    </location>
    <ligand>
        <name>NAD(+)</name>
        <dbReference type="ChEBI" id="CHEBI:57540"/>
    </ligand>
</feature>
<accession>Q89187</accession>
<dbReference type="EC" id="1.1.1.145"/>
<dbReference type="EC" id="5.3.3.1"/>
<dbReference type="EMBL" id="X69198">
    <property type="protein sequence ID" value="CAA49096.1"/>
    <property type="molecule type" value="Genomic_DNA"/>
</dbReference>
<dbReference type="PIR" id="E36853">
    <property type="entry name" value="E36853"/>
</dbReference>
<dbReference type="PIR" id="JQ1850">
    <property type="entry name" value="JQ1850"/>
</dbReference>
<dbReference type="RefSeq" id="NP_042199.1">
    <property type="nucleotide sequence ID" value="NC_001611.1"/>
</dbReference>
<dbReference type="GeneID" id="1486530"/>
<dbReference type="KEGG" id="vg:1486530"/>
<dbReference type="UniPathway" id="UPA00062"/>
<dbReference type="Proteomes" id="UP000002060">
    <property type="component" value="Segment"/>
</dbReference>
<dbReference type="GO" id="GO:0003854">
    <property type="term" value="F:3-beta-hydroxy-Delta5-steroid dehydrogenase (NAD+) activity"/>
    <property type="evidence" value="ECO:0007669"/>
    <property type="project" value="UniProtKB-EC"/>
</dbReference>
<dbReference type="GO" id="GO:0004769">
    <property type="term" value="F:steroid Delta-isomerase activity"/>
    <property type="evidence" value="ECO:0007669"/>
    <property type="project" value="UniProtKB-EC"/>
</dbReference>
<dbReference type="GO" id="GO:0006694">
    <property type="term" value="P:steroid biosynthetic process"/>
    <property type="evidence" value="ECO:0007669"/>
    <property type="project" value="UniProtKB-UniPathway"/>
</dbReference>
<dbReference type="Gene3D" id="3.40.50.720">
    <property type="entry name" value="NAD(P)-binding Rossmann-like Domain"/>
    <property type="match status" value="1"/>
</dbReference>
<dbReference type="InterPro" id="IPR002225">
    <property type="entry name" value="3Beta_OHSteriod_DH/Estase"/>
</dbReference>
<dbReference type="InterPro" id="IPR036291">
    <property type="entry name" value="NAD(P)-bd_dom_sf"/>
</dbReference>
<dbReference type="Pfam" id="PF01073">
    <property type="entry name" value="3Beta_HSD"/>
    <property type="match status" value="1"/>
</dbReference>
<dbReference type="SUPFAM" id="SSF51735">
    <property type="entry name" value="NAD(P)-binding Rossmann-fold domains"/>
    <property type="match status" value="1"/>
</dbReference>
<organism>
    <name type="scientific">Variola virus (isolate Human/India/Ind3/1967)</name>
    <name type="common">VARV</name>
    <name type="synonym">Smallpox virus</name>
    <dbReference type="NCBI Taxonomy" id="587200"/>
    <lineage>
        <taxon>Viruses</taxon>
        <taxon>Varidnaviria</taxon>
        <taxon>Bamfordvirae</taxon>
        <taxon>Nucleocytoviricota</taxon>
        <taxon>Pokkesviricetes</taxon>
        <taxon>Chitovirales</taxon>
        <taxon>Poxviridae</taxon>
        <taxon>Chordopoxvirinae</taxon>
        <taxon>Orthopoxvirus</taxon>
        <taxon>Variola virus</taxon>
    </lineage>
</organism>
<proteinExistence type="evidence at transcript level"/>
<comment type="function">
    <text evidence="2">Catalyzes the oxidative conversion of Delta(5)-ene-3-beta-hydroxy steroid, and the oxidative conversion of ketosteroids. The 3-beta-HSD enzymatic system plays a crucial role in the biosynthesis of all classes of hormonal steroids. During viral infection, steroid production contributes to virulence by inhibiting the host inflammatory response.</text>
</comment>
<comment type="catalytic activity">
    <reaction evidence="2">
        <text>a 3beta-hydroxy-Delta(5)-steroid + NAD(+) = a 3-oxo-Delta(5)-steroid + NADH + H(+)</text>
        <dbReference type="Rhea" id="RHEA:24076"/>
        <dbReference type="ChEBI" id="CHEBI:1722"/>
        <dbReference type="ChEBI" id="CHEBI:15378"/>
        <dbReference type="ChEBI" id="CHEBI:47907"/>
        <dbReference type="ChEBI" id="CHEBI:57540"/>
        <dbReference type="ChEBI" id="CHEBI:57945"/>
        <dbReference type="EC" id="1.1.1.145"/>
    </reaction>
</comment>
<comment type="catalytic activity">
    <reaction evidence="2">
        <text>a 3-oxo-Delta(5)-steroid = a 3-oxo-Delta(4)-steroid</text>
        <dbReference type="Rhea" id="RHEA:14709"/>
        <dbReference type="ChEBI" id="CHEBI:47907"/>
        <dbReference type="ChEBI" id="CHEBI:47909"/>
        <dbReference type="EC" id="5.3.3.1"/>
    </reaction>
</comment>
<comment type="pathway">
    <text evidence="2">Lipid metabolism; steroid biosynthesis.</text>
</comment>
<comment type="induction">
    <text>Expressed in the early phase of the viral replicative cycle.</text>
</comment>
<comment type="similarity">
    <text evidence="3">Belongs to the 3-beta-HSD family.</text>
</comment>
<keyword id="KW-0244">Early protein</keyword>
<keyword id="KW-0945">Host-virus interaction</keyword>
<keyword id="KW-0413">Isomerase</keyword>
<keyword id="KW-0511">Multifunctional enzyme</keyword>
<keyword id="KW-0520">NAD</keyword>
<keyword id="KW-0560">Oxidoreductase</keyword>
<keyword id="KW-1185">Reference proteome</keyword>
<keyword id="KW-0755">Steroidogenesis</keyword>
<keyword id="KW-0899">Viral immunoevasion</keyword>
<name>3BHS_VAR67</name>
<gene>
    <name type="primary">OPG174</name>
    <name type="synonym">A49L</name>
</gene>
<evidence type="ECO:0000250" key="1"/>
<evidence type="ECO:0000250" key="2">
    <source>
        <dbReference type="UniProtKB" id="P26670"/>
    </source>
</evidence>
<evidence type="ECO:0000305" key="3"/>
<organismHost>
    <name type="scientific">Homo sapiens</name>
    <name type="common">Human</name>
    <dbReference type="NCBI Taxonomy" id="9606"/>
</organismHost>